<comment type="function">
    <text evidence="1">Binds together with bS18 to 16S ribosomal RNA.</text>
</comment>
<comment type="similarity">
    <text evidence="1">Belongs to the bacterial ribosomal protein bS6 family.</text>
</comment>
<name>RS6_PARPJ</name>
<keyword id="KW-0687">Ribonucleoprotein</keyword>
<keyword id="KW-0689">Ribosomal protein</keyword>
<keyword id="KW-0694">RNA-binding</keyword>
<keyword id="KW-0699">rRNA-binding</keyword>
<gene>
    <name evidence="1" type="primary">rpsF</name>
    <name type="ordered locus">Bphyt_1786</name>
</gene>
<evidence type="ECO:0000255" key="1">
    <source>
        <dbReference type="HAMAP-Rule" id="MF_00360"/>
    </source>
</evidence>
<evidence type="ECO:0000256" key="2">
    <source>
        <dbReference type="SAM" id="MobiDB-lite"/>
    </source>
</evidence>
<evidence type="ECO:0000305" key="3"/>
<dbReference type="EMBL" id="CP001052">
    <property type="protein sequence ID" value="ACD16194.1"/>
    <property type="molecule type" value="Genomic_DNA"/>
</dbReference>
<dbReference type="RefSeq" id="WP_006048823.1">
    <property type="nucleotide sequence ID" value="NC_010681.1"/>
</dbReference>
<dbReference type="SMR" id="B2T3N3"/>
<dbReference type="STRING" id="398527.Bphyt_1786"/>
<dbReference type="GeneID" id="97305421"/>
<dbReference type="KEGG" id="bpy:Bphyt_1786"/>
<dbReference type="eggNOG" id="COG0360">
    <property type="taxonomic scope" value="Bacteria"/>
</dbReference>
<dbReference type="HOGENOM" id="CLU_113441_6_1_4"/>
<dbReference type="OrthoDB" id="9812702at2"/>
<dbReference type="Proteomes" id="UP000001739">
    <property type="component" value="Chromosome 1"/>
</dbReference>
<dbReference type="GO" id="GO:0022627">
    <property type="term" value="C:cytosolic small ribosomal subunit"/>
    <property type="evidence" value="ECO:0007669"/>
    <property type="project" value="TreeGrafter"/>
</dbReference>
<dbReference type="GO" id="GO:0070181">
    <property type="term" value="F:small ribosomal subunit rRNA binding"/>
    <property type="evidence" value="ECO:0007669"/>
    <property type="project" value="TreeGrafter"/>
</dbReference>
<dbReference type="GO" id="GO:0003735">
    <property type="term" value="F:structural constituent of ribosome"/>
    <property type="evidence" value="ECO:0007669"/>
    <property type="project" value="InterPro"/>
</dbReference>
<dbReference type="GO" id="GO:0006412">
    <property type="term" value="P:translation"/>
    <property type="evidence" value="ECO:0007669"/>
    <property type="project" value="UniProtKB-UniRule"/>
</dbReference>
<dbReference type="CDD" id="cd00473">
    <property type="entry name" value="bS6"/>
    <property type="match status" value="1"/>
</dbReference>
<dbReference type="Gene3D" id="3.30.70.60">
    <property type="match status" value="1"/>
</dbReference>
<dbReference type="HAMAP" id="MF_00360">
    <property type="entry name" value="Ribosomal_bS6"/>
    <property type="match status" value="1"/>
</dbReference>
<dbReference type="InterPro" id="IPR000529">
    <property type="entry name" value="Ribosomal_bS6"/>
</dbReference>
<dbReference type="InterPro" id="IPR035980">
    <property type="entry name" value="Ribosomal_bS6_sf"/>
</dbReference>
<dbReference type="InterPro" id="IPR020814">
    <property type="entry name" value="Ribosomal_S6_plastid/chlpt"/>
</dbReference>
<dbReference type="InterPro" id="IPR014717">
    <property type="entry name" value="Transl_elong_EF1B/ribsomal_bS6"/>
</dbReference>
<dbReference type="NCBIfam" id="TIGR00166">
    <property type="entry name" value="S6"/>
    <property type="match status" value="1"/>
</dbReference>
<dbReference type="PANTHER" id="PTHR21011">
    <property type="entry name" value="MITOCHONDRIAL 28S RIBOSOMAL PROTEIN S6"/>
    <property type="match status" value="1"/>
</dbReference>
<dbReference type="PANTHER" id="PTHR21011:SF1">
    <property type="entry name" value="SMALL RIBOSOMAL SUBUNIT PROTEIN BS6M"/>
    <property type="match status" value="1"/>
</dbReference>
<dbReference type="Pfam" id="PF01250">
    <property type="entry name" value="Ribosomal_S6"/>
    <property type="match status" value="1"/>
</dbReference>
<dbReference type="SUPFAM" id="SSF54995">
    <property type="entry name" value="Ribosomal protein S6"/>
    <property type="match status" value="1"/>
</dbReference>
<proteinExistence type="inferred from homology"/>
<sequence length="124" mass="14352">MRHYEIVFIVHPDQSEQVPAMIERYKSTITSHGGQIHRIEDWGRRQLAYMIEKLAKAHYVCMNIECDQTTLDELEHAFKFNDAVLRHLIVKMKKAETGPSPMMKEVQREEAKKSAATQPSEAQA</sequence>
<reference key="1">
    <citation type="journal article" date="2011" name="J. Bacteriol.">
        <title>Complete genome sequence of the plant growth-promoting endophyte Burkholderia phytofirmans strain PsJN.</title>
        <authorList>
            <person name="Weilharter A."/>
            <person name="Mitter B."/>
            <person name="Shin M.V."/>
            <person name="Chain P.S."/>
            <person name="Nowak J."/>
            <person name="Sessitsch A."/>
        </authorList>
    </citation>
    <scope>NUCLEOTIDE SEQUENCE [LARGE SCALE GENOMIC DNA]</scope>
    <source>
        <strain>DSM 17436 / LMG 22146 / PsJN</strain>
    </source>
</reference>
<protein>
    <recommendedName>
        <fullName evidence="1">Small ribosomal subunit protein bS6</fullName>
    </recommendedName>
    <alternativeName>
        <fullName evidence="3">30S ribosomal protein S6</fullName>
    </alternativeName>
</protein>
<feature type="chain" id="PRO_1000120721" description="Small ribosomal subunit protein bS6">
    <location>
        <begin position="1"/>
        <end position="124"/>
    </location>
</feature>
<feature type="region of interest" description="Disordered" evidence="2">
    <location>
        <begin position="96"/>
        <end position="124"/>
    </location>
</feature>
<feature type="compositionally biased region" description="Polar residues" evidence="2">
    <location>
        <begin position="115"/>
        <end position="124"/>
    </location>
</feature>
<organism>
    <name type="scientific">Paraburkholderia phytofirmans (strain DSM 17436 / LMG 22146 / PsJN)</name>
    <name type="common">Burkholderia phytofirmans</name>
    <dbReference type="NCBI Taxonomy" id="398527"/>
    <lineage>
        <taxon>Bacteria</taxon>
        <taxon>Pseudomonadati</taxon>
        <taxon>Pseudomonadota</taxon>
        <taxon>Betaproteobacteria</taxon>
        <taxon>Burkholderiales</taxon>
        <taxon>Burkholderiaceae</taxon>
        <taxon>Paraburkholderia</taxon>
    </lineage>
</organism>
<accession>B2T3N3</accession>